<keyword id="KW-0472">Membrane</keyword>
<keyword id="KW-1185">Reference proteome</keyword>
<keyword id="KW-0812">Transmembrane</keyword>
<keyword id="KW-1133">Transmembrane helix</keyword>
<comment type="subcellular location">
    <subcellularLocation>
        <location evidence="2">Membrane</location>
        <topology evidence="2">Single-pass membrane protein</topology>
    </subcellularLocation>
</comment>
<protein>
    <recommendedName>
        <fullName>Uncharacterized protein YpmS</fullName>
    </recommendedName>
</protein>
<gene>
    <name type="primary">ypmS</name>
    <name type="ordered locus">BSU21730</name>
</gene>
<dbReference type="EMBL" id="L77246">
    <property type="protein sequence ID" value="AAA96643.1"/>
    <property type="molecule type" value="Genomic_DNA"/>
</dbReference>
<dbReference type="EMBL" id="AL009126">
    <property type="protein sequence ID" value="CAB14091.1"/>
    <property type="molecule type" value="Genomic_DNA"/>
</dbReference>
<dbReference type="PIR" id="B69939">
    <property type="entry name" value="B69939"/>
</dbReference>
<dbReference type="RefSeq" id="NP_390056.1">
    <property type="nucleotide sequence ID" value="NC_000964.3"/>
</dbReference>
<dbReference type="RefSeq" id="WP_003230807.1">
    <property type="nucleotide sequence ID" value="NZ_OZ025638.1"/>
</dbReference>
<dbReference type="FunCoup" id="P54179">
    <property type="interactions" value="31"/>
</dbReference>
<dbReference type="STRING" id="224308.BSU21730"/>
<dbReference type="PaxDb" id="224308-BSU21730"/>
<dbReference type="DNASU" id="939100"/>
<dbReference type="EnsemblBacteria" id="CAB14091">
    <property type="protein sequence ID" value="CAB14091"/>
    <property type="gene ID" value="BSU_21730"/>
</dbReference>
<dbReference type="GeneID" id="939100"/>
<dbReference type="KEGG" id="bsu:BSU21730"/>
<dbReference type="PATRIC" id="fig|224308.179.peg.2374"/>
<dbReference type="eggNOG" id="COG4698">
    <property type="taxonomic scope" value="Bacteria"/>
</dbReference>
<dbReference type="InParanoid" id="P54179"/>
<dbReference type="OrthoDB" id="2412610at2"/>
<dbReference type="PhylomeDB" id="P54179"/>
<dbReference type="BioCyc" id="BSUB:BSU21730-MONOMER"/>
<dbReference type="Proteomes" id="UP000001570">
    <property type="component" value="Chromosome"/>
</dbReference>
<dbReference type="GO" id="GO:0016020">
    <property type="term" value="C:membrane"/>
    <property type="evidence" value="ECO:0007669"/>
    <property type="project" value="UniProtKB-SubCell"/>
</dbReference>
<dbReference type="InterPro" id="IPR018672">
    <property type="entry name" value="DUF2140"/>
</dbReference>
<dbReference type="Pfam" id="PF09911">
    <property type="entry name" value="DUF2140"/>
    <property type="match status" value="1"/>
</dbReference>
<accession>P54179</accession>
<sequence>MNKWKRLFFILLAINFILAAGFVALVLLPGEQAQVKDASESEYGFQVTSTKESLAAFVNSYLNDKASNKLDYKVEIDDDVHVAGKIKAFSTSIDAFIAFEPTVKKNGDVELNVTKFSLGKLSIPISFVLNYMDSFYELPSFVHVHPGDKSIEVRLSEMPLTNGMYVKADKINLEKDEIEFSYYHPKQ</sequence>
<reference key="1">
    <citation type="journal article" date="1996" name="Microbiology">
        <title>Organization of the Bacillus subtilis 168 chromosome between kdg and the attachment site of the SP beta prophage: use of long accurate PCR and yeast artificial chromosomes for sequencing.</title>
        <authorList>
            <person name="Capuano V."/>
            <person name="Galleron N."/>
            <person name="Pujic P."/>
            <person name="Sorokin A."/>
            <person name="Ehrlich S.D."/>
        </authorList>
    </citation>
    <scope>NUCLEOTIDE SEQUENCE [GENOMIC DNA]</scope>
    <source>
        <strain>168 / Marburg / ATCC 6051 / DSM 10 / JCM 1465 / NBRC 13719 / NCIMB 3610 / NRRL NRS-744 / VKM B-501</strain>
    </source>
</reference>
<reference key="2">
    <citation type="journal article" date="1997" name="Nature">
        <title>The complete genome sequence of the Gram-positive bacterium Bacillus subtilis.</title>
        <authorList>
            <person name="Kunst F."/>
            <person name="Ogasawara N."/>
            <person name="Moszer I."/>
            <person name="Albertini A.M."/>
            <person name="Alloni G."/>
            <person name="Azevedo V."/>
            <person name="Bertero M.G."/>
            <person name="Bessieres P."/>
            <person name="Bolotin A."/>
            <person name="Borchert S."/>
            <person name="Borriss R."/>
            <person name="Boursier L."/>
            <person name="Brans A."/>
            <person name="Braun M."/>
            <person name="Brignell S.C."/>
            <person name="Bron S."/>
            <person name="Brouillet S."/>
            <person name="Bruschi C.V."/>
            <person name="Caldwell B."/>
            <person name="Capuano V."/>
            <person name="Carter N.M."/>
            <person name="Choi S.-K."/>
            <person name="Codani J.-J."/>
            <person name="Connerton I.F."/>
            <person name="Cummings N.J."/>
            <person name="Daniel R.A."/>
            <person name="Denizot F."/>
            <person name="Devine K.M."/>
            <person name="Duesterhoeft A."/>
            <person name="Ehrlich S.D."/>
            <person name="Emmerson P.T."/>
            <person name="Entian K.-D."/>
            <person name="Errington J."/>
            <person name="Fabret C."/>
            <person name="Ferrari E."/>
            <person name="Foulger D."/>
            <person name="Fritz C."/>
            <person name="Fujita M."/>
            <person name="Fujita Y."/>
            <person name="Fuma S."/>
            <person name="Galizzi A."/>
            <person name="Galleron N."/>
            <person name="Ghim S.-Y."/>
            <person name="Glaser P."/>
            <person name="Goffeau A."/>
            <person name="Golightly E.J."/>
            <person name="Grandi G."/>
            <person name="Guiseppi G."/>
            <person name="Guy B.J."/>
            <person name="Haga K."/>
            <person name="Haiech J."/>
            <person name="Harwood C.R."/>
            <person name="Henaut A."/>
            <person name="Hilbert H."/>
            <person name="Holsappel S."/>
            <person name="Hosono S."/>
            <person name="Hullo M.-F."/>
            <person name="Itaya M."/>
            <person name="Jones L.-M."/>
            <person name="Joris B."/>
            <person name="Karamata D."/>
            <person name="Kasahara Y."/>
            <person name="Klaerr-Blanchard M."/>
            <person name="Klein C."/>
            <person name="Kobayashi Y."/>
            <person name="Koetter P."/>
            <person name="Koningstein G."/>
            <person name="Krogh S."/>
            <person name="Kumano M."/>
            <person name="Kurita K."/>
            <person name="Lapidus A."/>
            <person name="Lardinois S."/>
            <person name="Lauber J."/>
            <person name="Lazarevic V."/>
            <person name="Lee S.-M."/>
            <person name="Levine A."/>
            <person name="Liu H."/>
            <person name="Masuda S."/>
            <person name="Mauel C."/>
            <person name="Medigue C."/>
            <person name="Medina N."/>
            <person name="Mellado R.P."/>
            <person name="Mizuno M."/>
            <person name="Moestl D."/>
            <person name="Nakai S."/>
            <person name="Noback M."/>
            <person name="Noone D."/>
            <person name="O'Reilly M."/>
            <person name="Ogawa K."/>
            <person name="Ogiwara A."/>
            <person name="Oudega B."/>
            <person name="Park S.-H."/>
            <person name="Parro V."/>
            <person name="Pohl T.M."/>
            <person name="Portetelle D."/>
            <person name="Porwollik S."/>
            <person name="Prescott A.M."/>
            <person name="Presecan E."/>
            <person name="Pujic P."/>
            <person name="Purnelle B."/>
            <person name="Rapoport G."/>
            <person name="Rey M."/>
            <person name="Reynolds S."/>
            <person name="Rieger M."/>
            <person name="Rivolta C."/>
            <person name="Rocha E."/>
            <person name="Roche B."/>
            <person name="Rose M."/>
            <person name="Sadaie Y."/>
            <person name="Sato T."/>
            <person name="Scanlan E."/>
            <person name="Schleich S."/>
            <person name="Schroeter R."/>
            <person name="Scoffone F."/>
            <person name="Sekiguchi J."/>
            <person name="Sekowska A."/>
            <person name="Seror S.J."/>
            <person name="Serror P."/>
            <person name="Shin B.-S."/>
            <person name="Soldo B."/>
            <person name="Sorokin A."/>
            <person name="Tacconi E."/>
            <person name="Takagi T."/>
            <person name="Takahashi H."/>
            <person name="Takemaru K."/>
            <person name="Takeuchi M."/>
            <person name="Tamakoshi A."/>
            <person name="Tanaka T."/>
            <person name="Terpstra P."/>
            <person name="Tognoni A."/>
            <person name="Tosato V."/>
            <person name="Uchiyama S."/>
            <person name="Vandenbol M."/>
            <person name="Vannier F."/>
            <person name="Vassarotti A."/>
            <person name="Viari A."/>
            <person name="Wambutt R."/>
            <person name="Wedler E."/>
            <person name="Wedler H."/>
            <person name="Weitzenegger T."/>
            <person name="Winters P."/>
            <person name="Wipat A."/>
            <person name="Yamamoto H."/>
            <person name="Yamane K."/>
            <person name="Yasumoto K."/>
            <person name="Yata K."/>
            <person name="Yoshida K."/>
            <person name="Yoshikawa H.-F."/>
            <person name="Zumstein E."/>
            <person name="Yoshikawa H."/>
            <person name="Danchin A."/>
        </authorList>
    </citation>
    <scope>NUCLEOTIDE SEQUENCE [LARGE SCALE GENOMIC DNA]</scope>
    <source>
        <strain>168</strain>
    </source>
</reference>
<evidence type="ECO:0000255" key="1"/>
<evidence type="ECO:0000305" key="2"/>
<organism>
    <name type="scientific">Bacillus subtilis (strain 168)</name>
    <dbReference type="NCBI Taxonomy" id="224308"/>
    <lineage>
        <taxon>Bacteria</taxon>
        <taxon>Bacillati</taxon>
        <taxon>Bacillota</taxon>
        <taxon>Bacilli</taxon>
        <taxon>Bacillales</taxon>
        <taxon>Bacillaceae</taxon>
        <taxon>Bacillus</taxon>
    </lineage>
</organism>
<feature type="chain" id="PRO_0000049713" description="Uncharacterized protein YpmS">
    <location>
        <begin position="1"/>
        <end position="187"/>
    </location>
</feature>
<feature type="transmembrane region" description="Helical" evidence="1">
    <location>
        <begin position="8"/>
        <end position="28"/>
    </location>
</feature>
<name>YPMS_BACSU</name>
<proteinExistence type="predicted"/>